<dbReference type="EC" id="2.8.4.3" evidence="1"/>
<dbReference type="EMBL" id="CP000029">
    <property type="protein sequence ID" value="AAW54251.1"/>
    <property type="molecule type" value="Genomic_DNA"/>
</dbReference>
<dbReference type="RefSeq" id="WP_002439565.1">
    <property type="nucleotide sequence ID" value="NC_002976.3"/>
</dbReference>
<dbReference type="SMR" id="Q5HPP8"/>
<dbReference type="STRING" id="176279.SERP0860"/>
<dbReference type="GeneID" id="50018895"/>
<dbReference type="KEGG" id="ser:SERP0860"/>
<dbReference type="eggNOG" id="COG0621">
    <property type="taxonomic scope" value="Bacteria"/>
</dbReference>
<dbReference type="HOGENOM" id="CLU_018697_2_0_9"/>
<dbReference type="Proteomes" id="UP000000531">
    <property type="component" value="Chromosome"/>
</dbReference>
<dbReference type="GO" id="GO:0005829">
    <property type="term" value="C:cytosol"/>
    <property type="evidence" value="ECO:0007669"/>
    <property type="project" value="TreeGrafter"/>
</dbReference>
<dbReference type="GO" id="GO:0051539">
    <property type="term" value="F:4 iron, 4 sulfur cluster binding"/>
    <property type="evidence" value="ECO:0007669"/>
    <property type="project" value="UniProtKB-UniRule"/>
</dbReference>
<dbReference type="GO" id="GO:0046872">
    <property type="term" value="F:metal ion binding"/>
    <property type="evidence" value="ECO:0007669"/>
    <property type="project" value="UniProtKB-KW"/>
</dbReference>
<dbReference type="GO" id="GO:0035597">
    <property type="term" value="F:N6-isopentenyladenosine methylthiotransferase activity"/>
    <property type="evidence" value="ECO:0007669"/>
    <property type="project" value="TreeGrafter"/>
</dbReference>
<dbReference type="CDD" id="cd01335">
    <property type="entry name" value="Radical_SAM"/>
    <property type="match status" value="1"/>
</dbReference>
<dbReference type="FunFam" id="3.40.50.12160:FF:000006">
    <property type="entry name" value="tRNA-2-methylthio-N(6)-dimethylallyladenosine synthase"/>
    <property type="match status" value="1"/>
</dbReference>
<dbReference type="FunFam" id="3.80.30.20:FF:000001">
    <property type="entry name" value="tRNA-2-methylthio-N(6)-dimethylallyladenosine synthase 2"/>
    <property type="match status" value="1"/>
</dbReference>
<dbReference type="Gene3D" id="3.40.50.12160">
    <property type="entry name" value="Methylthiotransferase, N-terminal domain"/>
    <property type="match status" value="1"/>
</dbReference>
<dbReference type="Gene3D" id="3.80.30.20">
    <property type="entry name" value="tm_1862 like domain"/>
    <property type="match status" value="1"/>
</dbReference>
<dbReference type="HAMAP" id="MF_01864">
    <property type="entry name" value="tRNA_metthiotr_MiaB"/>
    <property type="match status" value="1"/>
</dbReference>
<dbReference type="InterPro" id="IPR006638">
    <property type="entry name" value="Elp3/MiaA/NifB-like_rSAM"/>
</dbReference>
<dbReference type="InterPro" id="IPR005839">
    <property type="entry name" value="Methylthiotransferase"/>
</dbReference>
<dbReference type="InterPro" id="IPR020612">
    <property type="entry name" value="Methylthiotransferase_CS"/>
</dbReference>
<dbReference type="InterPro" id="IPR013848">
    <property type="entry name" value="Methylthiotransferase_N"/>
</dbReference>
<dbReference type="InterPro" id="IPR038135">
    <property type="entry name" value="Methylthiotransferase_N_sf"/>
</dbReference>
<dbReference type="InterPro" id="IPR006463">
    <property type="entry name" value="MiaB_methiolase"/>
</dbReference>
<dbReference type="InterPro" id="IPR007197">
    <property type="entry name" value="rSAM"/>
</dbReference>
<dbReference type="InterPro" id="IPR023404">
    <property type="entry name" value="rSAM_horseshoe"/>
</dbReference>
<dbReference type="InterPro" id="IPR002792">
    <property type="entry name" value="TRAM_dom"/>
</dbReference>
<dbReference type="NCBIfam" id="TIGR01574">
    <property type="entry name" value="miaB-methiolase"/>
    <property type="match status" value="1"/>
</dbReference>
<dbReference type="NCBIfam" id="TIGR00089">
    <property type="entry name" value="MiaB/RimO family radical SAM methylthiotransferase"/>
    <property type="match status" value="1"/>
</dbReference>
<dbReference type="PANTHER" id="PTHR43020">
    <property type="entry name" value="CDK5 REGULATORY SUBUNIT-ASSOCIATED PROTEIN 1"/>
    <property type="match status" value="1"/>
</dbReference>
<dbReference type="PANTHER" id="PTHR43020:SF2">
    <property type="entry name" value="MITOCHONDRIAL TRNA METHYLTHIOTRANSFERASE CDK5RAP1"/>
    <property type="match status" value="1"/>
</dbReference>
<dbReference type="Pfam" id="PF04055">
    <property type="entry name" value="Radical_SAM"/>
    <property type="match status" value="1"/>
</dbReference>
<dbReference type="Pfam" id="PF01938">
    <property type="entry name" value="TRAM"/>
    <property type="match status" value="1"/>
</dbReference>
<dbReference type="Pfam" id="PF00919">
    <property type="entry name" value="UPF0004"/>
    <property type="match status" value="1"/>
</dbReference>
<dbReference type="SFLD" id="SFLDF00273">
    <property type="entry name" value="(dimethylallyl)adenosine_tRNA"/>
    <property type="match status" value="1"/>
</dbReference>
<dbReference type="SFLD" id="SFLDG01082">
    <property type="entry name" value="B12-binding_domain_containing"/>
    <property type="match status" value="1"/>
</dbReference>
<dbReference type="SFLD" id="SFLDG01061">
    <property type="entry name" value="methylthiotransferase"/>
    <property type="match status" value="1"/>
</dbReference>
<dbReference type="SMART" id="SM00729">
    <property type="entry name" value="Elp3"/>
    <property type="match status" value="1"/>
</dbReference>
<dbReference type="SUPFAM" id="SSF102114">
    <property type="entry name" value="Radical SAM enzymes"/>
    <property type="match status" value="1"/>
</dbReference>
<dbReference type="PROSITE" id="PS51449">
    <property type="entry name" value="MTTASE_N"/>
    <property type="match status" value="1"/>
</dbReference>
<dbReference type="PROSITE" id="PS01278">
    <property type="entry name" value="MTTASE_RADICAL"/>
    <property type="match status" value="1"/>
</dbReference>
<dbReference type="PROSITE" id="PS51918">
    <property type="entry name" value="RADICAL_SAM"/>
    <property type="match status" value="1"/>
</dbReference>
<dbReference type="PROSITE" id="PS50926">
    <property type="entry name" value="TRAM"/>
    <property type="match status" value="1"/>
</dbReference>
<feature type="chain" id="PRO_0000374579" description="tRNA-2-methylthio-N(6)-dimethylallyladenosine synthase">
    <location>
        <begin position="1"/>
        <end position="514"/>
    </location>
</feature>
<feature type="domain" description="MTTase N-terminal" evidence="1">
    <location>
        <begin position="68"/>
        <end position="186"/>
    </location>
</feature>
<feature type="domain" description="Radical SAM core" evidence="2">
    <location>
        <begin position="209"/>
        <end position="439"/>
    </location>
</feature>
<feature type="domain" description="TRAM" evidence="1">
    <location>
        <begin position="442"/>
        <end position="505"/>
    </location>
</feature>
<feature type="binding site" evidence="1">
    <location>
        <position position="77"/>
    </location>
    <ligand>
        <name>[4Fe-4S] cluster</name>
        <dbReference type="ChEBI" id="CHEBI:49883"/>
        <label>1</label>
    </ligand>
</feature>
<feature type="binding site" evidence="1">
    <location>
        <position position="113"/>
    </location>
    <ligand>
        <name>[4Fe-4S] cluster</name>
        <dbReference type="ChEBI" id="CHEBI:49883"/>
        <label>1</label>
    </ligand>
</feature>
<feature type="binding site" evidence="1">
    <location>
        <position position="147"/>
    </location>
    <ligand>
        <name>[4Fe-4S] cluster</name>
        <dbReference type="ChEBI" id="CHEBI:49883"/>
        <label>1</label>
    </ligand>
</feature>
<feature type="binding site" evidence="1">
    <location>
        <position position="223"/>
    </location>
    <ligand>
        <name>[4Fe-4S] cluster</name>
        <dbReference type="ChEBI" id="CHEBI:49883"/>
        <label>2</label>
        <note>4Fe-4S-S-AdoMet</note>
    </ligand>
</feature>
<feature type="binding site" evidence="1">
    <location>
        <position position="227"/>
    </location>
    <ligand>
        <name>[4Fe-4S] cluster</name>
        <dbReference type="ChEBI" id="CHEBI:49883"/>
        <label>2</label>
        <note>4Fe-4S-S-AdoMet</note>
    </ligand>
</feature>
<feature type="binding site" evidence="1">
    <location>
        <position position="230"/>
    </location>
    <ligand>
        <name>[4Fe-4S] cluster</name>
        <dbReference type="ChEBI" id="CHEBI:49883"/>
        <label>2</label>
        <note>4Fe-4S-S-AdoMet</note>
    </ligand>
</feature>
<accession>Q5HPP8</accession>
<sequence length="514" mass="58856">MNEEQRKAGTINILAERDRKAEKDYSKYFEQVYQPPSLKEAKKRGKQEVQYNRDFHIDEKYKGMGKGRTFLIKTYGCQMNAHDTEVMAGILNALGYSATSDINEADVILINTCAIRENAENKVFSEIGNLKHLKKERPDCLIGVCGCMSQEESVVNKILKSYQNVDMVFGTHNIHHLPEILEEAYLSKAMVVEVWSKEGDIIENLPKVRDGHIKAWVNIMYGCDKFCTYCIVPFTRGKERSRRPEDIIDEVRELAREGYQEITLLGQNVNSYGKDIEGLDYELGDLLEDISKIDIPRVRFTTSHPWDFTDRMIEVIAKGGNIVPHIHLPVQSGNNQVLKIMGRKYTRESYLDLVSRIKEAIPNVALTTDIIVGYPNETEEQFEETLSLYDDVQFEHAYTYLYSQRDGTPAAKMKDNVPLEVKKERLQRLNKKVGIYSQQAMSQYEGKIVTVLCEGSSKKDENVLAGYTDKNKLVNFKGPRESIGKLVDVKIDEAKQYSLNGTFIQEHQRSMVTQ</sequence>
<keyword id="KW-0004">4Fe-4S</keyword>
<keyword id="KW-0963">Cytoplasm</keyword>
<keyword id="KW-0408">Iron</keyword>
<keyword id="KW-0411">Iron-sulfur</keyword>
<keyword id="KW-0479">Metal-binding</keyword>
<keyword id="KW-1185">Reference proteome</keyword>
<keyword id="KW-0949">S-adenosyl-L-methionine</keyword>
<keyword id="KW-0808">Transferase</keyword>
<keyword id="KW-0819">tRNA processing</keyword>
<reference key="1">
    <citation type="journal article" date="2005" name="J. Bacteriol.">
        <title>Insights on evolution of virulence and resistance from the complete genome analysis of an early methicillin-resistant Staphylococcus aureus strain and a biofilm-producing methicillin-resistant Staphylococcus epidermidis strain.</title>
        <authorList>
            <person name="Gill S.R."/>
            <person name="Fouts D.E."/>
            <person name="Archer G.L."/>
            <person name="Mongodin E.F."/>
            <person name="DeBoy R.T."/>
            <person name="Ravel J."/>
            <person name="Paulsen I.T."/>
            <person name="Kolonay J.F."/>
            <person name="Brinkac L.M."/>
            <person name="Beanan M.J."/>
            <person name="Dodson R.J."/>
            <person name="Daugherty S.C."/>
            <person name="Madupu R."/>
            <person name="Angiuoli S.V."/>
            <person name="Durkin A.S."/>
            <person name="Haft D.H."/>
            <person name="Vamathevan J.J."/>
            <person name="Khouri H."/>
            <person name="Utterback T.R."/>
            <person name="Lee C."/>
            <person name="Dimitrov G."/>
            <person name="Jiang L."/>
            <person name="Qin H."/>
            <person name="Weidman J."/>
            <person name="Tran K."/>
            <person name="Kang K.H."/>
            <person name="Hance I.R."/>
            <person name="Nelson K.E."/>
            <person name="Fraser C.M."/>
        </authorList>
    </citation>
    <scope>NUCLEOTIDE SEQUENCE [LARGE SCALE GENOMIC DNA]</scope>
    <source>
        <strain>ATCC 35984 / DSM 28319 / BCRC 17069 / CCUG 31568 / BM 3577 / RP62A</strain>
    </source>
</reference>
<evidence type="ECO:0000255" key="1">
    <source>
        <dbReference type="HAMAP-Rule" id="MF_01864"/>
    </source>
</evidence>
<evidence type="ECO:0000255" key="2">
    <source>
        <dbReference type="PROSITE-ProRule" id="PRU01266"/>
    </source>
</evidence>
<name>MIAB_STAEQ</name>
<protein>
    <recommendedName>
        <fullName evidence="1">tRNA-2-methylthio-N(6)-dimethylallyladenosine synthase</fullName>
        <ecNumber evidence="1">2.8.4.3</ecNumber>
    </recommendedName>
    <alternativeName>
        <fullName evidence="1">(Dimethylallyl)adenosine tRNA methylthiotransferase MiaB</fullName>
    </alternativeName>
    <alternativeName>
        <fullName evidence="1">tRNA-i(6)A37 methylthiotransferase</fullName>
    </alternativeName>
</protein>
<gene>
    <name evidence="1" type="primary">miaB</name>
    <name type="ordered locus">SERP0860</name>
</gene>
<proteinExistence type="inferred from homology"/>
<organism>
    <name type="scientific">Staphylococcus epidermidis (strain ATCC 35984 / DSM 28319 / BCRC 17069 / CCUG 31568 / BM 3577 / RP62A)</name>
    <dbReference type="NCBI Taxonomy" id="176279"/>
    <lineage>
        <taxon>Bacteria</taxon>
        <taxon>Bacillati</taxon>
        <taxon>Bacillota</taxon>
        <taxon>Bacilli</taxon>
        <taxon>Bacillales</taxon>
        <taxon>Staphylococcaceae</taxon>
        <taxon>Staphylococcus</taxon>
    </lineage>
</organism>
<comment type="function">
    <text evidence="1">Catalyzes the methylthiolation of N6-(dimethylallyl)adenosine (i(6)A), leading to the formation of 2-methylthio-N6-(dimethylallyl)adenosine (ms(2)i(6)A) at position 37 in tRNAs that read codons beginning with uridine.</text>
</comment>
<comment type="catalytic activity">
    <reaction evidence="1">
        <text>N(6)-dimethylallyladenosine(37) in tRNA + (sulfur carrier)-SH + AH2 + 2 S-adenosyl-L-methionine = 2-methylsulfanyl-N(6)-dimethylallyladenosine(37) in tRNA + (sulfur carrier)-H + 5'-deoxyadenosine + L-methionine + A + S-adenosyl-L-homocysteine + 2 H(+)</text>
        <dbReference type="Rhea" id="RHEA:37067"/>
        <dbReference type="Rhea" id="RHEA-COMP:10375"/>
        <dbReference type="Rhea" id="RHEA-COMP:10376"/>
        <dbReference type="Rhea" id="RHEA-COMP:14737"/>
        <dbReference type="Rhea" id="RHEA-COMP:14739"/>
        <dbReference type="ChEBI" id="CHEBI:13193"/>
        <dbReference type="ChEBI" id="CHEBI:15378"/>
        <dbReference type="ChEBI" id="CHEBI:17319"/>
        <dbReference type="ChEBI" id="CHEBI:17499"/>
        <dbReference type="ChEBI" id="CHEBI:29917"/>
        <dbReference type="ChEBI" id="CHEBI:57844"/>
        <dbReference type="ChEBI" id="CHEBI:57856"/>
        <dbReference type="ChEBI" id="CHEBI:59789"/>
        <dbReference type="ChEBI" id="CHEBI:64428"/>
        <dbReference type="ChEBI" id="CHEBI:74415"/>
        <dbReference type="ChEBI" id="CHEBI:74417"/>
        <dbReference type="EC" id="2.8.4.3"/>
    </reaction>
</comment>
<comment type="cofactor">
    <cofactor evidence="1">
        <name>[4Fe-4S] cluster</name>
        <dbReference type="ChEBI" id="CHEBI:49883"/>
    </cofactor>
    <text evidence="1">Binds 2 [4Fe-4S] clusters. One cluster is coordinated with 3 cysteines and an exchangeable S-adenosyl-L-methionine.</text>
</comment>
<comment type="subunit">
    <text evidence="1">Monomer.</text>
</comment>
<comment type="subcellular location">
    <subcellularLocation>
        <location evidence="1">Cytoplasm</location>
    </subcellularLocation>
</comment>
<comment type="similarity">
    <text evidence="1">Belongs to the methylthiotransferase family. MiaB subfamily.</text>
</comment>